<accession>Q5E8A1</accession>
<evidence type="ECO:0000255" key="1">
    <source>
        <dbReference type="HAMAP-Rule" id="MF_00537"/>
    </source>
</evidence>
<evidence type="ECO:0000305" key="2"/>
<organism>
    <name type="scientific">Aliivibrio fischeri (strain ATCC 700601 / ES114)</name>
    <name type="common">Vibrio fischeri</name>
    <dbReference type="NCBI Taxonomy" id="312309"/>
    <lineage>
        <taxon>Bacteria</taxon>
        <taxon>Pseudomonadati</taxon>
        <taxon>Pseudomonadota</taxon>
        <taxon>Gammaproteobacteria</taxon>
        <taxon>Vibrionales</taxon>
        <taxon>Vibrionaceae</taxon>
        <taxon>Aliivibrio</taxon>
    </lineage>
</organism>
<gene>
    <name evidence="1" type="primary">rpsN</name>
    <name type="ordered locus">VF_0250</name>
</gene>
<proteinExistence type="inferred from homology"/>
<protein>
    <recommendedName>
        <fullName evidence="1">Small ribosomal subunit protein uS14</fullName>
    </recommendedName>
    <alternativeName>
        <fullName evidence="2">30S ribosomal protein S14</fullName>
    </alternativeName>
</protein>
<dbReference type="EMBL" id="CP000020">
    <property type="protein sequence ID" value="AAW84745.1"/>
    <property type="molecule type" value="Genomic_DNA"/>
</dbReference>
<dbReference type="RefSeq" id="WP_011261079.1">
    <property type="nucleotide sequence ID" value="NC_006840.2"/>
</dbReference>
<dbReference type="RefSeq" id="YP_203633.1">
    <property type="nucleotide sequence ID" value="NC_006840.2"/>
</dbReference>
<dbReference type="SMR" id="Q5E8A1"/>
<dbReference type="STRING" id="312309.VF_0250"/>
<dbReference type="EnsemblBacteria" id="AAW84745">
    <property type="protein sequence ID" value="AAW84745"/>
    <property type="gene ID" value="VF_0250"/>
</dbReference>
<dbReference type="GeneID" id="54162871"/>
<dbReference type="KEGG" id="vfi:VF_0250"/>
<dbReference type="PATRIC" id="fig|312309.11.peg.245"/>
<dbReference type="eggNOG" id="COG0199">
    <property type="taxonomic scope" value="Bacteria"/>
</dbReference>
<dbReference type="HOGENOM" id="CLU_139869_0_1_6"/>
<dbReference type="OrthoDB" id="9810484at2"/>
<dbReference type="Proteomes" id="UP000000537">
    <property type="component" value="Chromosome I"/>
</dbReference>
<dbReference type="GO" id="GO:0005737">
    <property type="term" value="C:cytoplasm"/>
    <property type="evidence" value="ECO:0007669"/>
    <property type="project" value="UniProtKB-ARBA"/>
</dbReference>
<dbReference type="GO" id="GO:0015935">
    <property type="term" value="C:small ribosomal subunit"/>
    <property type="evidence" value="ECO:0007669"/>
    <property type="project" value="TreeGrafter"/>
</dbReference>
<dbReference type="GO" id="GO:0019843">
    <property type="term" value="F:rRNA binding"/>
    <property type="evidence" value="ECO:0007669"/>
    <property type="project" value="UniProtKB-UniRule"/>
</dbReference>
<dbReference type="GO" id="GO:0003735">
    <property type="term" value="F:structural constituent of ribosome"/>
    <property type="evidence" value="ECO:0007669"/>
    <property type="project" value="InterPro"/>
</dbReference>
<dbReference type="GO" id="GO:0006412">
    <property type="term" value="P:translation"/>
    <property type="evidence" value="ECO:0007669"/>
    <property type="project" value="UniProtKB-UniRule"/>
</dbReference>
<dbReference type="FunFam" id="1.10.287.1480:FF:000001">
    <property type="entry name" value="30S ribosomal protein S14"/>
    <property type="match status" value="1"/>
</dbReference>
<dbReference type="Gene3D" id="1.10.287.1480">
    <property type="match status" value="1"/>
</dbReference>
<dbReference type="HAMAP" id="MF_00537">
    <property type="entry name" value="Ribosomal_uS14_1"/>
    <property type="match status" value="1"/>
</dbReference>
<dbReference type="InterPro" id="IPR001209">
    <property type="entry name" value="Ribosomal_uS14"/>
</dbReference>
<dbReference type="InterPro" id="IPR023036">
    <property type="entry name" value="Ribosomal_uS14_bac/plastid"/>
</dbReference>
<dbReference type="InterPro" id="IPR018271">
    <property type="entry name" value="Ribosomal_uS14_CS"/>
</dbReference>
<dbReference type="NCBIfam" id="NF006477">
    <property type="entry name" value="PRK08881.1"/>
    <property type="match status" value="1"/>
</dbReference>
<dbReference type="PANTHER" id="PTHR19836">
    <property type="entry name" value="30S RIBOSOMAL PROTEIN S14"/>
    <property type="match status" value="1"/>
</dbReference>
<dbReference type="PANTHER" id="PTHR19836:SF19">
    <property type="entry name" value="SMALL RIBOSOMAL SUBUNIT PROTEIN US14M"/>
    <property type="match status" value="1"/>
</dbReference>
<dbReference type="Pfam" id="PF00253">
    <property type="entry name" value="Ribosomal_S14"/>
    <property type="match status" value="1"/>
</dbReference>
<dbReference type="SUPFAM" id="SSF57716">
    <property type="entry name" value="Glucocorticoid receptor-like (DNA-binding domain)"/>
    <property type="match status" value="1"/>
</dbReference>
<dbReference type="PROSITE" id="PS00527">
    <property type="entry name" value="RIBOSOMAL_S14"/>
    <property type="match status" value="1"/>
</dbReference>
<keyword id="KW-1185">Reference proteome</keyword>
<keyword id="KW-0687">Ribonucleoprotein</keyword>
<keyword id="KW-0689">Ribosomal protein</keyword>
<keyword id="KW-0694">RNA-binding</keyword>
<keyword id="KW-0699">rRNA-binding</keyword>
<comment type="function">
    <text evidence="1">Binds 16S rRNA, required for the assembly of 30S particles and may also be responsible for determining the conformation of the 16S rRNA at the A site.</text>
</comment>
<comment type="subunit">
    <text evidence="1">Part of the 30S ribosomal subunit. Contacts proteins S3 and S10.</text>
</comment>
<comment type="similarity">
    <text evidence="1">Belongs to the universal ribosomal protein uS14 family.</text>
</comment>
<feature type="chain" id="PRO_1000128629" description="Small ribosomal subunit protein uS14">
    <location>
        <begin position="1"/>
        <end position="101"/>
    </location>
</feature>
<reference key="1">
    <citation type="journal article" date="2005" name="Proc. Natl. Acad. Sci. U.S.A.">
        <title>Complete genome sequence of Vibrio fischeri: a symbiotic bacterium with pathogenic congeners.</title>
        <authorList>
            <person name="Ruby E.G."/>
            <person name="Urbanowski M."/>
            <person name="Campbell J."/>
            <person name="Dunn A."/>
            <person name="Faini M."/>
            <person name="Gunsalus R."/>
            <person name="Lostroh P."/>
            <person name="Lupp C."/>
            <person name="McCann J."/>
            <person name="Millikan D."/>
            <person name="Schaefer A."/>
            <person name="Stabb E."/>
            <person name="Stevens A."/>
            <person name="Visick K."/>
            <person name="Whistler C."/>
            <person name="Greenberg E.P."/>
        </authorList>
    </citation>
    <scope>NUCLEOTIDE SEQUENCE [LARGE SCALE GENOMIC DNA]</scope>
    <source>
        <strain>ATCC 700601 / ES114</strain>
    </source>
</reference>
<name>RS14_ALIF1</name>
<sequence length="101" mass="11482">MGKQSMKAREAKRAKLVAKFAEKRAALKVLISDVNASEEERWDAVLKLQSLPRDSSASRQRNRCNQTGRPHGYLRKFGLSRIKVREACMKGEIPGLRKASW</sequence>